<gene>
    <name evidence="1" type="primary">cbiD</name>
    <name type="ordered locus">PMT_0044</name>
</gene>
<feature type="chain" id="PRO_0000141676" description="Cobalt-precorrin-5B C(1)-methyltransferase">
    <location>
        <begin position="1"/>
        <end position="383"/>
    </location>
</feature>
<protein>
    <recommendedName>
        <fullName evidence="1">Cobalt-precorrin-5B C(1)-methyltransferase</fullName>
        <ecNumber evidence="1">2.1.1.195</ecNumber>
    </recommendedName>
    <alternativeName>
        <fullName evidence="1">Cobalt-precorrin-6A synthase</fullName>
    </alternativeName>
</protein>
<accession>Q7V9B0</accession>
<sequence length="383" mass="40755">MTLPVWVAAAARAATEALLGRPFSASQLLELPDRDEPLAVSVTSAAVLAGGEQALAISHCDPGSGLDLTRGLEIWVCVQWQELVDDELNVHSEAWLNLLAGKGVGTLGSGGEACVSRFARELLSRNLYPLVPSGRGLQLEVVLPRGRDLAARTSNAAFGVVDGLALIGTQADVQVSASPDQLQQTIEQLRRQSAASDFCGAMTLVIGENGLDLARQLGLAAQPLLKIGNWLGPVIVAAAEAGVEQLLLLGYHGKLVKLAGGIFHTHHHLADGRLEVLAAMAVREGLPLDLIRQLGQADSMEAALKMLEAQDPELVRKLWYRLAVTVEHRSAAYLARYGSWSIAIGAALFDRQRRLRWAGPQGSQQLAVLGVTPEDSPISLSLP</sequence>
<dbReference type="EC" id="2.1.1.195" evidence="1"/>
<dbReference type="EMBL" id="BX548175">
    <property type="protein sequence ID" value="CAE20219.1"/>
    <property type="molecule type" value="Genomic_DNA"/>
</dbReference>
<dbReference type="RefSeq" id="WP_011129423.1">
    <property type="nucleotide sequence ID" value="NC_005071.1"/>
</dbReference>
<dbReference type="SMR" id="Q7V9B0"/>
<dbReference type="KEGG" id="pmt:PMT_0044"/>
<dbReference type="eggNOG" id="COG1903">
    <property type="taxonomic scope" value="Bacteria"/>
</dbReference>
<dbReference type="HOGENOM" id="CLU_041273_1_2_3"/>
<dbReference type="OrthoDB" id="6439987at2"/>
<dbReference type="UniPathway" id="UPA00148">
    <property type="reaction ID" value="UER00227"/>
</dbReference>
<dbReference type="Proteomes" id="UP000001423">
    <property type="component" value="Chromosome"/>
</dbReference>
<dbReference type="GO" id="GO:0043780">
    <property type="term" value="F:cobalt-precorrin-5B C1-methyltransferase activity"/>
    <property type="evidence" value="ECO:0007669"/>
    <property type="project" value="RHEA"/>
</dbReference>
<dbReference type="GO" id="GO:0019251">
    <property type="term" value="P:anaerobic cobalamin biosynthetic process"/>
    <property type="evidence" value="ECO:0007669"/>
    <property type="project" value="UniProtKB-UniRule"/>
</dbReference>
<dbReference type="GO" id="GO:0032259">
    <property type="term" value="P:methylation"/>
    <property type="evidence" value="ECO:0007669"/>
    <property type="project" value="UniProtKB-KW"/>
</dbReference>
<dbReference type="Gene3D" id="3.30.2110.10">
    <property type="entry name" value="CbiD-like"/>
    <property type="match status" value="1"/>
</dbReference>
<dbReference type="HAMAP" id="MF_00787">
    <property type="entry name" value="CbiD"/>
    <property type="match status" value="1"/>
</dbReference>
<dbReference type="InterPro" id="IPR002748">
    <property type="entry name" value="CbiD"/>
</dbReference>
<dbReference type="InterPro" id="IPR036074">
    <property type="entry name" value="CbiD_sf"/>
</dbReference>
<dbReference type="NCBIfam" id="TIGR00312">
    <property type="entry name" value="cbiD"/>
    <property type="match status" value="1"/>
</dbReference>
<dbReference type="PANTHER" id="PTHR35863">
    <property type="entry name" value="COBALT-PRECORRIN-5B C(1)-METHYLTRANSFERASE"/>
    <property type="match status" value="1"/>
</dbReference>
<dbReference type="PANTHER" id="PTHR35863:SF1">
    <property type="entry name" value="COBALT-PRECORRIN-5B C(1)-METHYLTRANSFERASE"/>
    <property type="match status" value="1"/>
</dbReference>
<dbReference type="Pfam" id="PF01888">
    <property type="entry name" value="CbiD"/>
    <property type="match status" value="1"/>
</dbReference>
<dbReference type="PIRSF" id="PIRSF026782">
    <property type="entry name" value="CbiD"/>
    <property type="match status" value="1"/>
</dbReference>
<dbReference type="SUPFAM" id="SSF111342">
    <property type="entry name" value="CbiD-like"/>
    <property type="match status" value="1"/>
</dbReference>
<evidence type="ECO:0000255" key="1">
    <source>
        <dbReference type="HAMAP-Rule" id="MF_00787"/>
    </source>
</evidence>
<reference key="1">
    <citation type="journal article" date="2003" name="Nature">
        <title>Genome divergence in two Prochlorococcus ecotypes reflects oceanic niche differentiation.</title>
        <authorList>
            <person name="Rocap G."/>
            <person name="Larimer F.W."/>
            <person name="Lamerdin J.E."/>
            <person name="Malfatti S."/>
            <person name="Chain P."/>
            <person name="Ahlgren N.A."/>
            <person name="Arellano A."/>
            <person name="Coleman M."/>
            <person name="Hauser L."/>
            <person name="Hess W.R."/>
            <person name="Johnson Z.I."/>
            <person name="Land M.L."/>
            <person name="Lindell D."/>
            <person name="Post A.F."/>
            <person name="Regala W."/>
            <person name="Shah M."/>
            <person name="Shaw S.L."/>
            <person name="Steglich C."/>
            <person name="Sullivan M.B."/>
            <person name="Ting C.S."/>
            <person name="Tolonen A."/>
            <person name="Webb E.A."/>
            <person name="Zinser E.R."/>
            <person name="Chisholm S.W."/>
        </authorList>
    </citation>
    <scope>NUCLEOTIDE SEQUENCE [LARGE SCALE GENOMIC DNA]</scope>
    <source>
        <strain>MIT 9313</strain>
    </source>
</reference>
<proteinExistence type="inferred from homology"/>
<keyword id="KW-0169">Cobalamin biosynthesis</keyword>
<keyword id="KW-0489">Methyltransferase</keyword>
<keyword id="KW-1185">Reference proteome</keyword>
<keyword id="KW-0949">S-adenosyl-L-methionine</keyword>
<keyword id="KW-0808">Transferase</keyword>
<name>CBID_PROMM</name>
<organism>
    <name type="scientific">Prochlorococcus marinus (strain MIT 9313)</name>
    <dbReference type="NCBI Taxonomy" id="74547"/>
    <lineage>
        <taxon>Bacteria</taxon>
        <taxon>Bacillati</taxon>
        <taxon>Cyanobacteriota</taxon>
        <taxon>Cyanophyceae</taxon>
        <taxon>Synechococcales</taxon>
        <taxon>Prochlorococcaceae</taxon>
        <taxon>Prochlorococcus</taxon>
    </lineage>
</organism>
<comment type="function">
    <text evidence="1">Catalyzes the methylation of C-1 in cobalt-precorrin-5B to form cobalt-precorrin-6A.</text>
</comment>
<comment type="catalytic activity">
    <reaction evidence="1">
        <text>Co-precorrin-5B + S-adenosyl-L-methionine = Co-precorrin-6A + S-adenosyl-L-homocysteine</text>
        <dbReference type="Rhea" id="RHEA:26285"/>
        <dbReference type="ChEBI" id="CHEBI:57856"/>
        <dbReference type="ChEBI" id="CHEBI:59789"/>
        <dbReference type="ChEBI" id="CHEBI:60063"/>
        <dbReference type="ChEBI" id="CHEBI:60064"/>
        <dbReference type="EC" id="2.1.1.195"/>
    </reaction>
</comment>
<comment type="pathway">
    <text evidence="1">Cofactor biosynthesis; adenosylcobalamin biosynthesis; cob(II)yrinate a,c-diamide from sirohydrochlorin (anaerobic route): step 6/10.</text>
</comment>
<comment type="similarity">
    <text evidence="1">Belongs to the CbiD family.</text>
</comment>